<feature type="chain" id="PRO_0000091893" description="Forkhead box protein S1">
    <location>
        <begin position="1"/>
        <end position="330"/>
    </location>
</feature>
<feature type="DNA-binding region" description="Fork-head" evidence="2">
    <location>
        <begin position="17"/>
        <end position="108"/>
    </location>
</feature>
<feature type="region of interest" description="Disordered" evidence="3">
    <location>
        <begin position="111"/>
        <end position="157"/>
    </location>
</feature>
<feature type="region of interest" description="Disordered" evidence="3">
    <location>
        <begin position="179"/>
        <end position="200"/>
    </location>
</feature>
<feature type="compositionally biased region" description="Polar residues" evidence="3">
    <location>
        <begin position="136"/>
        <end position="151"/>
    </location>
</feature>
<feature type="compositionally biased region" description="Basic and acidic residues" evidence="3">
    <location>
        <begin position="184"/>
        <end position="196"/>
    </location>
</feature>
<feature type="sequence variant" id="VAR_021844" description="In dbSNP:rs2296917.">
    <original>P</original>
    <variation>A</variation>
    <location>
        <position position="292"/>
    </location>
</feature>
<proteinExistence type="evidence at protein level"/>
<accession>O43638</accession>
<accession>Q96D28</accession>
<organism>
    <name type="scientific">Homo sapiens</name>
    <name type="common">Human</name>
    <dbReference type="NCBI Taxonomy" id="9606"/>
    <lineage>
        <taxon>Eukaryota</taxon>
        <taxon>Metazoa</taxon>
        <taxon>Chordata</taxon>
        <taxon>Craniata</taxon>
        <taxon>Vertebrata</taxon>
        <taxon>Euteleostomi</taxon>
        <taxon>Mammalia</taxon>
        <taxon>Eutheria</taxon>
        <taxon>Euarchontoglires</taxon>
        <taxon>Primates</taxon>
        <taxon>Haplorrhini</taxon>
        <taxon>Catarrhini</taxon>
        <taxon>Hominidae</taxon>
        <taxon>Homo</taxon>
    </lineage>
</organism>
<gene>
    <name type="primary">FOXS1</name>
    <name type="synonym">FKHL18</name>
    <name type="synonym">FREAC10</name>
</gene>
<sequence>MQQQPLPGPGAPTTEPTKPPYSYIALIAMAIQSSPGQRATLSGIYRYIMGRFAFYRHNRPGWQNSIRHNLSLNECFVKVPRDDRKPGKGSYWTLDPDCHDMFEHGSFLRRRRRFTRQTGAEGTRGPAKARRGPLRATSQDPGVPNATTGRQCSFPPELPDPKGLSFGGLVGAMPASMCPATTDGRPRPPMEPKEISTPKPACPGELPVATSSSSCPAFGFPAGFSEAESFNKAPTPVLSPESGIGSSYQCRLQALNFCMGADPGLEHLLASAAPSPAPPTPPGSLRAPLPLPTDHKEPWVAGGFPVQGGSGYPLGLTPCLYRTPGMFFFE</sequence>
<protein>
    <recommendedName>
        <fullName>Forkhead box protein S1</fullName>
    </recommendedName>
    <alternativeName>
        <fullName>Forkhead-like 18 protein</fullName>
    </alternativeName>
    <alternativeName>
        <fullName>Forkhead-related transcription factor 10</fullName>
        <shortName>FREAC-10</shortName>
    </alternativeName>
</protein>
<name>FOXS1_HUMAN</name>
<evidence type="ECO:0000250" key="1"/>
<evidence type="ECO:0000255" key="2">
    <source>
        <dbReference type="PROSITE-ProRule" id="PRU00089"/>
    </source>
</evidence>
<evidence type="ECO:0000256" key="3">
    <source>
        <dbReference type="SAM" id="MobiDB-lite"/>
    </source>
</evidence>
<reference key="1">
    <citation type="submission" date="2003-08" db="EMBL/GenBank/DDBJ databases">
        <title>Cloning of human full-length CDSs in BD Creator(TM) system donor vector.</title>
        <authorList>
            <person name="Kalnine N."/>
            <person name="Chen X."/>
            <person name="Rolfs A."/>
            <person name="Halleck A."/>
            <person name="Hines L."/>
            <person name="Eisenstein S."/>
            <person name="Koundinya M."/>
            <person name="Raphael J."/>
            <person name="Moreira D."/>
            <person name="Kelley T."/>
            <person name="LaBaer J."/>
            <person name="Lin Y."/>
            <person name="Phelan M."/>
            <person name="Farmer A."/>
        </authorList>
    </citation>
    <scope>NUCLEOTIDE SEQUENCE [LARGE SCALE MRNA]</scope>
</reference>
<reference key="2">
    <citation type="journal article" date="2001" name="Nature">
        <title>The DNA sequence and comparative analysis of human chromosome 20.</title>
        <authorList>
            <person name="Deloukas P."/>
            <person name="Matthews L.H."/>
            <person name="Ashurst J.L."/>
            <person name="Burton J."/>
            <person name="Gilbert J.G.R."/>
            <person name="Jones M."/>
            <person name="Stavrides G."/>
            <person name="Almeida J.P."/>
            <person name="Babbage A.K."/>
            <person name="Bagguley C.L."/>
            <person name="Bailey J."/>
            <person name="Barlow K.F."/>
            <person name="Bates K.N."/>
            <person name="Beard L.M."/>
            <person name="Beare D.M."/>
            <person name="Beasley O.P."/>
            <person name="Bird C.P."/>
            <person name="Blakey S.E."/>
            <person name="Bridgeman A.M."/>
            <person name="Brown A.J."/>
            <person name="Buck D."/>
            <person name="Burrill W.D."/>
            <person name="Butler A.P."/>
            <person name="Carder C."/>
            <person name="Carter N.P."/>
            <person name="Chapman J.C."/>
            <person name="Clamp M."/>
            <person name="Clark G."/>
            <person name="Clark L.N."/>
            <person name="Clark S.Y."/>
            <person name="Clee C.M."/>
            <person name="Clegg S."/>
            <person name="Cobley V.E."/>
            <person name="Collier R.E."/>
            <person name="Connor R.E."/>
            <person name="Corby N.R."/>
            <person name="Coulson A."/>
            <person name="Coville G.J."/>
            <person name="Deadman R."/>
            <person name="Dhami P.D."/>
            <person name="Dunn M."/>
            <person name="Ellington A.G."/>
            <person name="Frankland J.A."/>
            <person name="Fraser A."/>
            <person name="French L."/>
            <person name="Garner P."/>
            <person name="Grafham D.V."/>
            <person name="Griffiths C."/>
            <person name="Griffiths M.N.D."/>
            <person name="Gwilliam R."/>
            <person name="Hall R.E."/>
            <person name="Hammond S."/>
            <person name="Harley J.L."/>
            <person name="Heath P.D."/>
            <person name="Ho S."/>
            <person name="Holden J.L."/>
            <person name="Howden P.J."/>
            <person name="Huckle E."/>
            <person name="Hunt A.R."/>
            <person name="Hunt S.E."/>
            <person name="Jekosch K."/>
            <person name="Johnson C.M."/>
            <person name="Johnson D."/>
            <person name="Kay M.P."/>
            <person name="Kimberley A.M."/>
            <person name="King A."/>
            <person name="Knights A."/>
            <person name="Laird G.K."/>
            <person name="Lawlor S."/>
            <person name="Lehvaeslaiho M.H."/>
            <person name="Leversha M.A."/>
            <person name="Lloyd C."/>
            <person name="Lloyd D.M."/>
            <person name="Lovell J.D."/>
            <person name="Marsh V.L."/>
            <person name="Martin S.L."/>
            <person name="McConnachie L.J."/>
            <person name="McLay K."/>
            <person name="McMurray A.A."/>
            <person name="Milne S.A."/>
            <person name="Mistry D."/>
            <person name="Moore M.J.F."/>
            <person name="Mullikin J.C."/>
            <person name="Nickerson T."/>
            <person name="Oliver K."/>
            <person name="Parker A."/>
            <person name="Patel R."/>
            <person name="Pearce T.A.V."/>
            <person name="Peck A.I."/>
            <person name="Phillimore B.J.C.T."/>
            <person name="Prathalingam S.R."/>
            <person name="Plumb R.W."/>
            <person name="Ramsay H."/>
            <person name="Rice C.M."/>
            <person name="Ross M.T."/>
            <person name="Scott C.E."/>
            <person name="Sehra H.K."/>
            <person name="Shownkeen R."/>
            <person name="Sims S."/>
            <person name="Skuce C.D."/>
            <person name="Smith M.L."/>
            <person name="Soderlund C."/>
            <person name="Steward C.A."/>
            <person name="Sulston J.E."/>
            <person name="Swann R.M."/>
            <person name="Sycamore N."/>
            <person name="Taylor R."/>
            <person name="Tee L."/>
            <person name="Thomas D.W."/>
            <person name="Thorpe A."/>
            <person name="Tracey A."/>
            <person name="Tromans A.C."/>
            <person name="Vaudin M."/>
            <person name="Wall M."/>
            <person name="Wallis J.M."/>
            <person name="Whitehead S.L."/>
            <person name="Whittaker P."/>
            <person name="Willey D.L."/>
            <person name="Williams L."/>
            <person name="Williams S.A."/>
            <person name="Wilming L."/>
            <person name="Wray P.W."/>
            <person name="Hubbard T."/>
            <person name="Durbin R.M."/>
            <person name="Bentley D.R."/>
            <person name="Beck S."/>
            <person name="Rogers J."/>
        </authorList>
    </citation>
    <scope>NUCLEOTIDE SEQUENCE [LARGE SCALE GENOMIC DNA]</scope>
</reference>
<reference key="3">
    <citation type="journal article" date="2004" name="Genome Res.">
        <title>The status, quality, and expansion of the NIH full-length cDNA project: the Mammalian Gene Collection (MGC).</title>
        <authorList>
            <consortium name="The MGC Project Team"/>
        </authorList>
    </citation>
    <scope>NUCLEOTIDE SEQUENCE [LARGE SCALE MRNA]</scope>
    <source>
        <tissue>Muscle</tissue>
    </source>
</reference>
<reference key="4">
    <citation type="journal article" date="1997" name="Genomics">
        <title>Chromosome localization, sequence analysis, and expression pattern identify FKHL 18 as a novel human forkhead gene.</title>
        <authorList>
            <person name="Cederberg A."/>
            <person name="Betz R."/>
            <person name="Lagercrantz S."/>
            <person name="Larsson C."/>
            <person name="Hulander M."/>
            <person name="Carlsson P."/>
            <person name="Enerbaeck S."/>
        </authorList>
    </citation>
    <scope>NUCLEOTIDE SEQUENCE [MRNA] OF 9-119</scope>
</reference>
<keyword id="KW-0238">DNA-binding</keyword>
<keyword id="KW-0539">Nucleus</keyword>
<keyword id="KW-1267">Proteomics identification</keyword>
<keyword id="KW-1185">Reference proteome</keyword>
<keyword id="KW-0678">Repressor</keyword>
<keyword id="KW-0804">Transcription</keyword>
<keyword id="KW-0805">Transcription regulation</keyword>
<dbReference type="EMBL" id="BT009768">
    <property type="protein sequence ID" value="AAP88770.1"/>
    <property type="molecule type" value="mRNA"/>
</dbReference>
<dbReference type="EMBL" id="AL160175">
    <property type="status" value="NOT_ANNOTATED_CDS"/>
    <property type="molecule type" value="Genomic_DNA"/>
</dbReference>
<dbReference type="EMBL" id="BC013408">
    <property type="protein sequence ID" value="AAH13408.1"/>
    <property type="molecule type" value="mRNA"/>
</dbReference>
<dbReference type="EMBL" id="AF042831">
    <property type="protein sequence ID" value="AAC15420.1"/>
    <property type="molecule type" value="mRNA"/>
</dbReference>
<dbReference type="CCDS" id="CCDS13192.1"/>
<dbReference type="RefSeq" id="NP_004109.1">
    <property type="nucleotide sequence ID" value="NM_004118.4"/>
</dbReference>
<dbReference type="SMR" id="O43638"/>
<dbReference type="BioGRID" id="108596">
    <property type="interactions" value="88"/>
</dbReference>
<dbReference type="FunCoup" id="O43638">
    <property type="interactions" value="364"/>
</dbReference>
<dbReference type="IntAct" id="O43638">
    <property type="interactions" value="80"/>
</dbReference>
<dbReference type="MINT" id="O43638"/>
<dbReference type="STRING" id="9606.ENSP00000365145"/>
<dbReference type="GlyGen" id="O43638">
    <property type="glycosylation" value="1 site"/>
</dbReference>
<dbReference type="iPTMnet" id="O43638"/>
<dbReference type="PhosphoSitePlus" id="O43638"/>
<dbReference type="BioMuta" id="FOXS1"/>
<dbReference type="jPOST" id="O43638"/>
<dbReference type="MassIVE" id="O43638"/>
<dbReference type="PaxDb" id="9606-ENSP00000365145"/>
<dbReference type="PeptideAtlas" id="O43638"/>
<dbReference type="ProteomicsDB" id="49087"/>
<dbReference type="Antibodypedia" id="25256">
    <property type="antibodies" value="79 antibodies from 21 providers"/>
</dbReference>
<dbReference type="DNASU" id="2307"/>
<dbReference type="Ensembl" id="ENST00000375978.5">
    <property type="protein sequence ID" value="ENSP00000365145.3"/>
    <property type="gene ID" value="ENSG00000179772.8"/>
</dbReference>
<dbReference type="GeneID" id="2307"/>
<dbReference type="KEGG" id="hsa:2307"/>
<dbReference type="MANE-Select" id="ENST00000375978.5">
    <property type="protein sequence ID" value="ENSP00000365145.3"/>
    <property type="RefSeq nucleotide sequence ID" value="NM_004118.4"/>
    <property type="RefSeq protein sequence ID" value="NP_004109.1"/>
</dbReference>
<dbReference type="UCSC" id="uc002wwt.2">
    <property type="organism name" value="human"/>
</dbReference>
<dbReference type="AGR" id="HGNC:3735"/>
<dbReference type="CTD" id="2307"/>
<dbReference type="DisGeNET" id="2307"/>
<dbReference type="GeneCards" id="FOXS1"/>
<dbReference type="HGNC" id="HGNC:3735">
    <property type="gene designation" value="FOXS1"/>
</dbReference>
<dbReference type="HPA" id="ENSG00000179772">
    <property type="expression patterns" value="Low tissue specificity"/>
</dbReference>
<dbReference type="MIM" id="602939">
    <property type="type" value="gene"/>
</dbReference>
<dbReference type="neXtProt" id="NX_O43638"/>
<dbReference type="OpenTargets" id="ENSG00000179772"/>
<dbReference type="PharmGKB" id="PA162388894"/>
<dbReference type="VEuPathDB" id="HostDB:ENSG00000179772"/>
<dbReference type="eggNOG" id="KOG2294">
    <property type="taxonomic scope" value="Eukaryota"/>
</dbReference>
<dbReference type="GeneTree" id="ENSGT00940000162811"/>
<dbReference type="HOGENOM" id="CLU_839247_0_0_1"/>
<dbReference type="InParanoid" id="O43638"/>
<dbReference type="OMA" id="QKEPWGP"/>
<dbReference type="OrthoDB" id="5954824at2759"/>
<dbReference type="PAN-GO" id="O43638">
    <property type="GO annotations" value="5 GO annotations based on evolutionary models"/>
</dbReference>
<dbReference type="PhylomeDB" id="O43638"/>
<dbReference type="TreeFam" id="TF316127"/>
<dbReference type="PathwayCommons" id="O43638"/>
<dbReference type="SignaLink" id="O43638"/>
<dbReference type="SIGNOR" id="O43638"/>
<dbReference type="BioGRID-ORCS" id="2307">
    <property type="hits" value="15 hits in 1171 CRISPR screens"/>
</dbReference>
<dbReference type="GenomeRNAi" id="2307"/>
<dbReference type="Pharos" id="O43638">
    <property type="development level" value="Tbio"/>
</dbReference>
<dbReference type="PRO" id="PR:O43638"/>
<dbReference type="Proteomes" id="UP000005640">
    <property type="component" value="Chromosome 20"/>
</dbReference>
<dbReference type="RNAct" id="O43638">
    <property type="molecule type" value="protein"/>
</dbReference>
<dbReference type="Bgee" id="ENSG00000179772">
    <property type="expression patterns" value="Expressed in right coronary artery and 99 other cell types or tissues"/>
</dbReference>
<dbReference type="GO" id="GO:0000785">
    <property type="term" value="C:chromatin"/>
    <property type="evidence" value="ECO:0000247"/>
    <property type="project" value="NTNU_SB"/>
</dbReference>
<dbReference type="GO" id="GO:0005634">
    <property type="term" value="C:nucleus"/>
    <property type="evidence" value="ECO:0000250"/>
    <property type="project" value="UniProtKB"/>
</dbReference>
<dbReference type="GO" id="GO:0003677">
    <property type="term" value="F:DNA binding"/>
    <property type="evidence" value="ECO:0000250"/>
    <property type="project" value="UniProtKB"/>
</dbReference>
<dbReference type="GO" id="GO:0003700">
    <property type="term" value="F:DNA-binding transcription factor activity"/>
    <property type="evidence" value="ECO:0000304"/>
    <property type="project" value="UniProtKB"/>
</dbReference>
<dbReference type="GO" id="GO:0000981">
    <property type="term" value="F:DNA-binding transcription factor activity, RNA polymerase II-specific"/>
    <property type="evidence" value="ECO:0000247"/>
    <property type="project" value="NTNU_SB"/>
</dbReference>
<dbReference type="GO" id="GO:0001227">
    <property type="term" value="F:DNA-binding transcription repressor activity, RNA polymerase II-specific"/>
    <property type="evidence" value="ECO:0007669"/>
    <property type="project" value="Ensembl"/>
</dbReference>
<dbReference type="GO" id="GO:0000978">
    <property type="term" value="F:RNA polymerase II cis-regulatory region sequence-specific DNA binding"/>
    <property type="evidence" value="ECO:0000318"/>
    <property type="project" value="GO_Central"/>
</dbReference>
<dbReference type="GO" id="GO:0009653">
    <property type="term" value="P:anatomical structure morphogenesis"/>
    <property type="evidence" value="ECO:0000318"/>
    <property type="project" value="GO_Central"/>
</dbReference>
<dbReference type="GO" id="GO:0001568">
    <property type="term" value="P:blood vessel development"/>
    <property type="evidence" value="ECO:0000250"/>
    <property type="project" value="UniProtKB"/>
</dbReference>
<dbReference type="GO" id="GO:0030154">
    <property type="term" value="P:cell differentiation"/>
    <property type="evidence" value="ECO:0000318"/>
    <property type="project" value="GO_Central"/>
</dbReference>
<dbReference type="GO" id="GO:0043433">
    <property type="term" value="P:negative regulation of DNA-binding transcription factor activity"/>
    <property type="evidence" value="ECO:0000250"/>
    <property type="project" value="UniProtKB"/>
</dbReference>
<dbReference type="GO" id="GO:0045892">
    <property type="term" value="P:negative regulation of DNA-templated transcription"/>
    <property type="evidence" value="ECO:0000250"/>
    <property type="project" value="UniProtKB"/>
</dbReference>
<dbReference type="GO" id="GO:0050885">
    <property type="term" value="P:neuromuscular process controlling balance"/>
    <property type="evidence" value="ECO:0007669"/>
    <property type="project" value="Ensembl"/>
</dbReference>
<dbReference type="GO" id="GO:0040018">
    <property type="term" value="P:positive regulation of multicellular organism growth"/>
    <property type="evidence" value="ECO:0007669"/>
    <property type="project" value="Ensembl"/>
</dbReference>
<dbReference type="GO" id="GO:0006357">
    <property type="term" value="P:regulation of transcription by RNA polymerase II"/>
    <property type="evidence" value="ECO:0000318"/>
    <property type="project" value="GO_Central"/>
</dbReference>
<dbReference type="CDD" id="cd20037">
    <property type="entry name" value="FH_FOXS1"/>
    <property type="match status" value="1"/>
</dbReference>
<dbReference type="FunFam" id="1.10.10.10:FF:000016">
    <property type="entry name" value="Forkhead box protein I1"/>
    <property type="match status" value="1"/>
</dbReference>
<dbReference type="Gene3D" id="1.10.10.10">
    <property type="entry name" value="Winged helix-like DNA-binding domain superfamily/Winged helix DNA-binding domain"/>
    <property type="match status" value="1"/>
</dbReference>
<dbReference type="InterPro" id="IPR047364">
    <property type="entry name" value="FH_FOXS1"/>
</dbReference>
<dbReference type="InterPro" id="IPR001766">
    <property type="entry name" value="Fork_head_dom"/>
</dbReference>
<dbReference type="InterPro" id="IPR050211">
    <property type="entry name" value="FOX_domain-containing"/>
</dbReference>
<dbReference type="InterPro" id="IPR018122">
    <property type="entry name" value="TF_fork_head_CS_1"/>
</dbReference>
<dbReference type="InterPro" id="IPR030456">
    <property type="entry name" value="TF_fork_head_CS_2"/>
</dbReference>
<dbReference type="InterPro" id="IPR036388">
    <property type="entry name" value="WH-like_DNA-bd_sf"/>
</dbReference>
<dbReference type="InterPro" id="IPR036390">
    <property type="entry name" value="WH_DNA-bd_sf"/>
</dbReference>
<dbReference type="PANTHER" id="PTHR11829">
    <property type="entry name" value="FORKHEAD BOX PROTEIN"/>
    <property type="match status" value="1"/>
</dbReference>
<dbReference type="PANTHER" id="PTHR11829:SF370">
    <property type="entry name" value="FORKHEAD BOX PROTEIN S1"/>
    <property type="match status" value="1"/>
</dbReference>
<dbReference type="Pfam" id="PF00250">
    <property type="entry name" value="Forkhead"/>
    <property type="match status" value="1"/>
</dbReference>
<dbReference type="PRINTS" id="PR00053">
    <property type="entry name" value="FORKHEAD"/>
</dbReference>
<dbReference type="SMART" id="SM00339">
    <property type="entry name" value="FH"/>
    <property type="match status" value="1"/>
</dbReference>
<dbReference type="SUPFAM" id="SSF46785">
    <property type="entry name" value="Winged helix' DNA-binding domain"/>
    <property type="match status" value="1"/>
</dbReference>
<dbReference type="PROSITE" id="PS00657">
    <property type="entry name" value="FORK_HEAD_1"/>
    <property type="match status" value="1"/>
</dbReference>
<dbReference type="PROSITE" id="PS00658">
    <property type="entry name" value="FORK_HEAD_2"/>
    <property type="match status" value="1"/>
</dbReference>
<dbReference type="PROSITE" id="PS50039">
    <property type="entry name" value="FORK_HEAD_3"/>
    <property type="match status" value="1"/>
</dbReference>
<comment type="function">
    <text evidence="1">Transcriptional repressor that suppresses transcription from the FASLG, FOXO3 and FOXO4 promoters. May have a role in the organization of the testicular vasculature (By similarity).</text>
</comment>
<comment type="subcellular location">
    <subcellularLocation>
        <location evidence="2">Nucleus</location>
    </subcellularLocation>
</comment>